<reference key="1">
    <citation type="submission" date="2001-07" db="EMBL/GenBank/DDBJ databases">
        <title>Genome-wide discovery and analysis of human seven transmembrane helix receptor genes.</title>
        <authorList>
            <person name="Suwa M."/>
            <person name="Sato T."/>
            <person name="Okouchi I."/>
            <person name="Arita M."/>
            <person name="Futami K."/>
            <person name="Matsumoto S."/>
            <person name="Tsutsumi S."/>
            <person name="Aburatani H."/>
            <person name="Asai K."/>
            <person name="Akiyama Y."/>
        </authorList>
    </citation>
    <scope>NUCLEOTIDE SEQUENCE [GENOMIC DNA]</scope>
</reference>
<reference key="2">
    <citation type="journal article" date="2006" name="Nature">
        <title>Human chromosome 11 DNA sequence and analysis including novel gene identification.</title>
        <authorList>
            <person name="Taylor T.D."/>
            <person name="Noguchi H."/>
            <person name="Totoki Y."/>
            <person name="Toyoda A."/>
            <person name="Kuroki Y."/>
            <person name="Dewar K."/>
            <person name="Lloyd C."/>
            <person name="Itoh T."/>
            <person name="Takeda T."/>
            <person name="Kim D.-W."/>
            <person name="She X."/>
            <person name="Barlow K.F."/>
            <person name="Bloom T."/>
            <person name="Bruford E."/>
            <person name="Chang J.L."/>
            <person name="Cuomo C.A."/>
            <person name="Eichler E."/>
            <person name="FitzGerald M.G."/>
            <person name="Jaffe D.B."/>
            <person name="LaButti K."/>
            <person name="Nicol R."/>
            <person name="Park H.-S."/>
            <person name="Seaman C."/>
            <person name="Sougnez C."/>
            <person name="Yang X."/>
            <person name="Zimmer A.R."/>
            <person name="Zody M.C."/>
            <person name="Birren B.W."/>
            <person name="Nusbaum C."/>
            <person name="Fujiyama A."/>
            <person name="Hattori M."/>
            <person name="Rogers J."/>
            <person name="Lander E.S."/>
            <person name="Sakaki Y."/>
        </authorList>
    </citation>
    <scope>NUCLEOTIDE SEQUENCE [LARGE SCALE GENOMIC DNA]</scope>
</reference>
<reference key="3">
    <citation type="journal article" date="2004" name="Genome Res.">
        <title>The status, quality, and expansion of the NIH full-length cDNA project: the Mammalian Gene Collection (MGC).</title>
        <authorList>
            <consortium name="The MGC Project Team"/>
        </authorList>
    </citation>
    <scope>NUCLEOTIDE SEQUENCE [LARGE SCALE MRNA]</scope>
</reference>
<reference key="4">
    <citation type="journal article" date="2004" name="Proc. Natl. Acad. Sci. U.S.A.">
        <title>The human olfactory receptor gene family.</title>
        <authorList>
            <person name="Malnic B."/>
            <person name="Godfrey P.A."/>
            <person name="Buck L.B."/>
        </authorList>
    </citation>
    <scope>IDENTIFICATION</scope>
</reference>
<reference key="5">
    <citation type="journal article" date="2004" name="Proc. Natl. Acad. Sci. U.S.A.">
        <authorList>
            <person name="Malnic B."/>
            <person name="Godfrey P.A."/>
            <person name="Buck L.B."/>
        </authorList>
    </citation>
    <scope>ERRATUM OF PUBMED:14983052</scope>
</reference>
<sequence length="318" mass="35823">MIQPMASPSNSSTVPVSEFLLICFPNFQSWQHWLSLPLSLLFLLAMGANTTLLITIQLEASLHQPLYYLLSLLSLLDIVLCLTVIPKVLAIFWYDLRSISFPACFLQMFIMNSFLPMESCTFMVMAYDRYVAICHPLRYPSIITNQFVAKASVFIVVRNALLTAPIPILTSLLHYCGENVIENCICANLSVSRLSCDNFTLNRIYQFVAGWTLLGSDLFLIFLSYTFILRAVLRFKAEGAAVKALSTCGSHFILILFFSTILLVVVLTNVARKKVPMDILILLNVLHHLIPPALNPIVYGVRTKEIKQGIQKLLQRGR</sequence>
<gene>
    <name type="primary">OR56A1</name>
</gene>
<keyword id="KW-1003">Cell membrane</keyword>
<keyword id="KW-1015">Disulfide bond</keyword>
<keyword id="KW-0297">G-protein coupled receptor</keyword>
<keyword id="KW-0325">Glycoprotein</keyword>
<keyword id="KW-0472">Membrane</keyword>
<keyword id="KW-0552">Olfaction</keyword>
<keyword id="KW-0675">Receptor</keyword>
<keyword id="KW-1185">Reference proteome</keyword>
<keyword id="KW-0716">Sensory transduction</keyword>
<keyword id="KW-0807">Transducer</keyword>
<keyword id="KW-0812">Transmembrane</keyword>
<keyword id="KW-1133">Transmembrane helix</keyword>
<accession>Q8NGH5</accession>
<accession>B2RNI2</accession>
<accession>Q6IFL0</accession>
<protein>
    <recommendedName>
        <fullName>Olfactory receptor 56A1</fullName>
    </recommendedName>
    <alternativeName>
        <fullName>Olfactory receptor OR11-75</fullName>
    </alternativeName>
</protein>
<feature type="chain" id="PRO_0000150793" description="Olfactory receptor 56A1">
    <location>
        <begin position="1"/>
        <end position="318"/>
    </location>
</feature>
<feature type="topological domain" description="Extracellular" evidence="1">
    <location>
        <begin position="1"/>
        <end position="32"/>
    </location>
</feature>
<feature type="transmembrane region" description="Helical; Name=1" evidence="1">
    <location>
        <begin position="33"/>
        <end position="53"/>
    </location>
</feature>
<feature type="topological domain" description="Cytoplasmic" evidence="1">
    <location>
        <begin position="54"/>
        <end position="61"/>
    </location>
</feature>
<feature type="transmembrane region" description="Helical; Name=2" evidence="1">
    <location>
        <begin position="62"/>
        <end position="82"/>
    </location>
</feature>
<feature type="topological domain" description="Extracellular" evidence="1">
    <location>
        <begin position="83"/>
        <end position="106"/>
    </location>
</feature>
<feature type="transmembrane region" description="Helical; Name=3" evidence="1">
    <location>
        <begin position="107"/>
        <end position="127"/>
    </location>
</feature>
<feature type="topological domain" description="Cytoplasmic" evidence="1">
    <location>
        <begin position="128"/>
        <end position="146"/>
    </location>
</feature>
<feature type="transmembrane region" description="Helical; Name=4" evidence="1">
    <location>
        <begin position="147"/>
        <end position="167"/>
    </location>
</feature>
<feature type="topological domain" description="Extracellular" evidence="1">
    <location>
        <begin position="168"/>
        <end position="203"/>
    </location>
</feature>
<feature type="transmembrane region" description="Helical; Name=5" evidence="1">
    <location>
        <begin position="204"/>
        <end position="224"/>
    </location>
</feature>
<feature type="topological domain" description="Cytoplasmic" evidence="1">
    <location>
        <begin position="225"/>
        <end position="244"/>
    </location>
</feature>
<feature type="transmembrane region" description="Helical; Name=6" evidence="1">
    <location>
        <begin position="245"/>
        <end position="265"/>
    </location>
</feature>
<feature type="topological domain" description="Extracellular" evidence="1">
    <location>
        <begin position="266"/>
        <end position="280"/>
    </location>
</feature>
<feature type="transmembrane region" description="Helical; Name=7" evidence="1">
    <location>
        <begin position="281"/>
        <end position="301"/>
    </location>
</feature>
<feature type="topological domain" description="Cytoplasmic" evidence="1">
    <location>
        <begin position="302"/>
        <end position="318"/>
    </location>
</feature>
<feature type="glycosylation site" description="N-linked (GlcNAc...) asparagine" evidence="1">
    <location>
        <position position="10"/>
    </location>
</feature>
<feature type="glycosylation site" description="N-linked (GlcNAc...) asparagine" evidence="1">
    <location>
        <position position="188"/>
    </location>
</feature>
<feature type="glycosylation site" description="N-linked (GlcNAc...) asparagine" evidence="1">
    <location>
        <position position="198"/>
    </location>
</feature>
<feature type="disulfide bond" evidence="2">
    <location>
        <begin position="104"/>
        <end position="196"/>
    </location>
</feature>
<feature type="sequence conflict" description="In Ref. 1; BAC06040." evidence="3" ref="1">
    <original>I</original>
    <variation>T</variation>
    <location>
        <position position="22"/>
    </location>
</feature>
<evidence type="ECO:0000255" key="1"/>
<evidence type="ECO:0000255" key="2">
    <source>
        <dbReference type="PROSITE-ProRule" id="PRU00521"/>
    </source>
</evidence>
<evidence type="ECO:0000305" key="3"/>
<comment type="function">
    <text evidence="3">Odorant receptor.</text>
</comment>
<comment type="subcellular location">
    <subcellularLocation>
        <location>Cell membrane</location>
        <topology>Multi-pass membrane protein</topology>
    </subcellularLocation>
</comment>
<comment type="similarity">
    <text evidence="2">Belongs to the G-protein coupled receptor 1 family.</text>
</comment>
<comment type="caution">
    <text evidence="3">It is uncertain whether Met-1 or Met-5 is the initiator.</text>
</comment>
<comment type="online information" name="Human Olfactory Receptor Data Exploratorium (HORDE)">
    <link uri="http://genome.weizmann.ac.il/horde/card/index/symbol:OR56A1"/>
</comment>
<organism>
    <name type="scientific">Homo sapiens</name>
    <name type="common">Human</name>
    <dbReference type="NCBI Taxonomy" id="9606"/>
    <lineage>
        <taxon>Eukaryota</taxon>
        <taxon>Metazoa</taxon>
        <taxon>Chordata</taxon>
        <taxon>Craniata</taxon>
        <taxon>Vertebrata</taxon>
        <taxon>Euteleostomi</taxon>
        <taxon>Mammalia</taxon>
        <taxon>Eutheria</taxon>
        <taxon>Euarchontoglires</taxon>
        <taxon>Primates</taxon>
        <taxon>Haplorrhini</taxon>
        <taxon>Catarrhini</taxon>
        <taxon>Hominidae</taxon>
        <taxon>Homo</taxon>
    </lineage>
</organism>
<name>O56A1_HUMAN</name>
<dbReference type="EMBL" id="AB065821">
    <property type="protein sequence ID" value="BAC06040.1"/>
    <property type="molecule type" value="Genomic_DNA"/>
</dbReference>
<dbReference type="EMBL" id="AC111177">
    <property type="status" value="NOT_ANNOTATED_CDS"/>
    <property type="molecule type" value="Genomic_DNA"/>
</dbReference>
<dbReference type="EMBL" id="BC136904">
    <property type="protein sequence ID" value="AAI36905.1"/>
    <property type="molecule type" value="mRNA"/>
</dbReference>
<dbReference type="EMBL" id="BC136911">
    <property type="protein sequence ID" value="AAI36912.1"/>
    <property type="molecule type" value="mRNA"/>
</dbReference>
<dbReference type="EMBL" id="BK004252">
    <property type="protein sequence ID" value="DAA04650.1"/>
    <property type="molecule type" value="Genomic_DNA"/>
</dbReference>
<dbReference type="RefSeq" id="NP_001001917.2">
    <property type="nucleotide sequence ID" value="NM_001001917.2"/>
</dbReference>
<dbReference type="SMR" id="Q8NGH5"/>
<dbReference type="FunCoup" id="Q8NGH5">
    <property type="interactions" value="444"/>
</dbReference>
<dbReference type="STRING" id="9606.ENSP00000321246"/>
<dbReference type="GlyCosmos" id="Q8NGH5">
    <property type="glycosylation" value="3 sites, No reported glycans"/>
</dbReference>
<dbReference type="GlyGen" id="Q8NGH5">
    <property type="glycosylation" value="3 sites"/>
</dbReference>
<dbReference type="iPTMnet" id="Q8NGH5"/>
<dbReference type="PhosphoSitePlus" id="Q8NGH5"/>
<dbReference type="BioMuta" id="OR56A1"/>
<dbReference type="DMDM" id="229462958"/>
<dbReference type="MassIVE" id="Q8NGH5"/>
<dbReference type="PaxDb" id="9606-ENSP00000321246"/>
<dbReference type="PeptideAtlas" id="Q8NGH5"/>
<dbReference type="DNASU" id="120796"/>
<dbReference type="GeneID" id="120796"/>
<dbReference type="KEGG" id="hsa:120796"/>
<dbReference type="UCSC" id="uc010qzw.2">
    <property type="organism name" value="human"/>
</dbReference>
<dbReference type="AGR" id="HGNC:14781"/>
<dbReference type="CTD" id="120796"/>
<dbReference type="GeneCards" id="OR56A1"/>
<dbReference type="HGNC" id="HGNC:14781">
    <property type="gene designation" value="OR56A1"/>
</dbReference>
<dbReference type="neXtProt" id="NX_Q8NGH5"/>
<dbReference type="PharmGKB" id="PA32443"/>
<dbReference type="eggNOG" id="ENOG502SJUD">
    <property type="taxonomic scope" value="Eukaryota"/>
</dbReference>
<dbReference type="HOGENOM" id="CLU_012526_0_0_1"/>
<dbReference type="InParanoid" id="Q8NGH5"/>
<dbReference type="OrthoDB" id="9448904at2759"/>
<dbReference type="PAN-GO" id="Q8NGH5">
    <property type="GO annotations" value="2 GO annotations based on evolutionary models"/>
</dbReference>
<dbReference type="PhylomeDB" id="Q8NGH5"/>
<dbReference type="TreeFam" id="TF344049"/>
<dbReference type="PathwayCommons" id="Q8NGH5"/>
<dbReference type="Reactome" id="R-HSA-9752946">
    <property type="pathway name" value="Expression and translocation of olfactory receptors"/>
</dbReference>
<dbReference type="BioGRID-ORCS" id="120796">
    <property type="hits" value="9 hits in 723 CRISPR screens"/>
</dbReference>
<dbReference type="GeneWiki" id="OR56A1"/>
<dbReference type="GenomeRNAi" id="120796"/>
<dbReference type="Pharos" id="Q8NGH5">
    <property type="development level" value="Tdark"/>
</dbReference>
<dbReference type="PRO" id="PR:Q8NGH5"/>
<dbReference type="Proteomes" id="UP000005640">
    <property type="component" value="Chromosome 11"/>
</dbReference>
<dbReference type="RNAct" id="Q8NGH5">
    <property type="molecule type" value="protein"/>
</dbReference>
<dbReference type="GO" id="GO:0005886">
    <property type="term" value="C:plasma membrane"/>
    <property type="evidence" value="ECO:0000318"/>
    <property type="project" value="GO_Central"/>
</dbReference>
<dbReference type="GO" id="GO:0004930">
    <property type="term" value="F:G protein-coupled receptor activity"/>
    <property type="evidence" value="ECO:0007669"/>
    <property type="project" value="UniProtKB-KW"/>
</dbReference>
<dbReference type="GO" id="GO:0004984">
    <property type="term" value="F:olfactory receptor activity"/>
    <property type="evidence" value="ECO:0000318"/>
    <property type="project" value="GO_Central"/>
</dbReference>
<dbReference type="FunFam" id="1.20.1070.10:FF:000002">
    <property type="entry name" value="Olfactory receptor"/>
    <property type="match status" value="1"/>
</dbReference>
<dbReference type="Gene3D" id="1.20.1070.10">
    <property type="entry name" value="Rhodopsin 7-helix transmembrane proteins"/>
    <property type="match status" value="1"/>
</dbReference>
<dbReference type="InterPro" id="IPR000276">
    <property type="entry name" value="GPCR_Rhodpsn"/>
</dbReference>
<dbReference type="InterPro" id="IPR017452">
    <property type="entry name" value="GPCR_Rhodpsn_7TM"/>
</dbReference>
<dbReference type="InterPro" id="IPR000725">
    <property type="entry name" value="Olfact_rcpt"/>
</dbReference>
<dbReference type="InterPro" id="IPR050402">
    <property type="entry name" value="OR51/52/56-like"/>
</dbReference>
<dbReference type="PANTHER" id="PTHR26450:SF425">
    <property type="entry name" value="OLFACTORY RECEPTOR 56A1"/>
    <property type="match status" value="1"/>
</dbReference>
<dbReference type="PANTHER" id="PTHR26450">
    <property type="entry name" value="OLFACTORY RECEPTOR 56B1-RELATED"/>
    <property type="match status" value="1"/>
</dbReference>
<dbReference type="Pfam" id="PF13853">
    <property type="entry name" value="7tm_4"/>
    <property type="match status" value="1"/>
</dbReference>
<dbReference type="PRINTS" id="PR00237">
    <property type="entry name" value="GPCRRHODOPSN"/>
</dbReference>
<dbReference type="PRINTS" id="PR00245">
    <property type="entry name" value="OLFACTORYR"/>
</dbReference>
<dbReference type="SMART" id="SM01381">
    <property type="entry name" value="7TM_GPCR_Srsx"/>
    <property type="match status" value="1"/>
</dbReference>
<dbReference type="SUPFAM" id="SSF81321">
    <property type="entry name" value="Family A G protein-coupled receptor-like"/>
    <property type="match status" value="1"/>
</dbReference>
<dbReference type="PROSITE" id="PS50262">
    <property type="entry name" value="G_PROTEIN_RECEP_F1_2"/>
    <property type="match status" value="1"/>
</dbReference>
<proteinExistence type="evidence at transcript level"/>